<sequence length="366" mass="42183">MMKASRSDTFMLRTWIQLLVLFVIMFIMSAILPIAASVEGLGFPCYFPNLVDYSLLNLTLRNAAKHLTPTLFLEAPELFVYITWSVLVDLASAIYYVVGALAILQARKTHLTSMITLQTWINLVGSHTMLFIGIARMWTLQLFIHVLSYKHVMLAAFIYFLHFCLSYMHTLSLVSRNSPKWSVLLMEQHIPKQSLLSTILDYGKPLCVNMYLSLLALEMLVFSLGFMMAIGNSFYILVSDTVLASINLYFVLTTFWYMMTEMFLQDYLKLQFGFYLGVFSGSLILLLPVLRYEAVFVSANLHKTVAVNIAMIPAMCVIAMMFRLFRYSQQVRKPENSYTPLPKRFKKRRQKQDQQLIMVETSDEEL</sequence>
<reference key="1">
    <citation type="journal article" date="1992" name="J. Virol.">
        <title>Primary structure of the herpesvirus saimiri genome.</title>
        <authorList>
            <person name="Albrecht J.-C."/>
            <person name="Nicholas J."/>
            <person name="Biller D."/>
            <person name="Cameron K.R."/>
            <person name="Biesinger B."/>
            <person name="Newman C."/>
            <person name="Wittmann S."/>
            <person name="Craxton M.A."/>
            <person name="Coleman H."/>
            <person name="Fleckenstein B."/>
            <person name="Honess R.W."/>
        </authorList>
    </citation>
    <scope>NUCLEOTIDE SEQUENCE [LARGE SCALE GENOMIC DNA]</scope>
</reference>
<gene>
    <name evidence="1" type="primary">gM</name>
    <name type="ORF">39</name>
</gene>
<dbReference type="EMBL" id="X64346">
    <property type="protein sequence ID" value="CAA45662.1"/>
    <property type="molecule type" value="Genomic_DNA"/>
</dbReference>
<dbReference type="RefSeq" id="NP_040241.1">
    <property type="nucleotide sequence ID" value="NC_001350.1"/>
</dbReference>
<dbReference type="KEGG" id="vg:1682458"/>
<dbReference type="Proteomes" id="UP000000587">
    <property type="component" value="Segment"/>
</dbReference>
<dbReference type="GO" id="GO:0044175">
    <property type="term" value="C:host cell endosome membrane"/>
    <property type="evidence" value="ECO:0007669"/>
    <property type="project" value="UniProtKB-SubCell"/>
</dbReference>
<dbReference type="GO" id="GO:0044177">
    <property type="term" value="C:host cell Golgi apparatus"/>
    <property type="evidence" value="ECO:0007669"/>
    <property type="project" value="UniProtKB-SubCell"/>
</dbReference>
<dbReference type="GO" id="GO:0044201">
    <property type="term" value="C:host cell nuclear inner membrane"/>
    <property type="evidence" value="ECO:0007669"/>
    <property type="project" value="UniProtKB-SubCell"/>
</dbReference>
<dbReference type="GO" id="GO:0016020">
    <property type="term" value="C:membrane"/>
    <property type="evidence" value="ECO:0007669"/>
    <property type="project" value="UniProtKB-KW"/>
</dbReference>
<dbReference type="GO" id="GO:0019031">
    <property type="term" value="C:viral envelope"/>
    <property type="evidence" value="ECO:0007669"/>
    <property type="project" value="UniProtKB-KW"/>
</dbReference>
<dbReference type="GO" id="GO:0055036">
    <property type="term" value="C:virion membrane"/>
    <property type="evidence" value="ECO:0007669"/>
    <property type="project" value="UniProtKB-SubCell"/>
</dbReference>
<dbReference type="HAMAP" id="MF_04035">
    <property type="entry name" value="HSV_GM"/>
    <property type="match status" value="1"/>
</dbReference>
<dbReference type="InterPro" id="IPR000785">
    <property type="entry name" value="Herpes_glycop_M"/>
</dbReference>
<dbReference type="Pfam" id="PF01528">
    <property type="entry name" value="Herpes_glycop"/>
    <property type="match status" value="1"/>
</dbReference>
<dbReference type="PRINTS" id="PR00333">
    <property type="entry name" value="HSVINTEGRLMP"/>
</dbReference>
<evidence type="ECO:0000255" key="1">
    <source>
        <dbReference type="HAMAP-Rule" id="MF_04035"/>
    </source>
</evidence>
<organismHost>
    <name type="scientific">Saimiri sciureus</name>
    <name type="common">Common squirrel monkey</name>
    <dbReference type="NCBI Taxonomy" id="9521"/>
</organismHost>
<keyword id="KW-1015">Disulfide bond</keyword>
<keyword id="KW-0325">Glycoprotein</keyword>
<keyword id="KW-1039">Host endosome</keyword>
<keyword id="KW-1040">Host Golgi apparatus</keyword>
<keyword id="KW-1043">Host membrane</keyword>
<keyword id="KW-1048">Host nucleus</keyword>
<keyword id="KW-0472">Membrane</keyword>
<keyword id="KW-1185">Reference proteome</keyword>
<keyword id="KW-0812">Transmembrane</keyword>
<keyword id="KW-1133">Transmembrane helix</keyword>
<keyword id="KW-0261">Viral envelope protein</keyword>
<keyword id="KW-0946">Virion</keyword>
<proteinExistence type="inferred from homology"/>
<feature type="chain" id="PRO_0000115784" description="Envelope glycoprotein M">
    <location>
        <begin position="1"/>
        <end position="366"/>
    </location>
</feature>
<feature type="topological domain" description="Intravirion" evidence="1">
    <location>
        <begin position="1"/>
        <end position="17"/>
    </location>
</feature>
<feature type="transmembrane region" description="Helical" evidence="1">
    <location>
        <begin position="18"/>
        <end position="38"/>
    </location>
</feature>
<feature type="topological domain" description="Virion surface" evidence="1">
    <location>
        <begin position="39"/>
        <end position="83"/>
    </location>
</feature>
<feature type="transmembrane region" description="Helical" evidence="1">
    <location>
        <begin position="84"/>
        <end position="104"/>
    </location>
</feature>
<feature type="topological domain" description="Intravirion" evidence="1">
    <location>
        <begin position="105"/>
        <end position="113"/>
    </location>
</feature>
<feature type="transmembrane region" description="Helical" evidence="1">
    <location>
        <begin position="114"/>
        <end position="134"/>
    </location>
</feature>
<feature type="topological domain" description="Virion surface" evidence="1">
    <location>
        <begin position="135"/>
        <end position="153"/>
    </location>
</feature>
<feature type="transmembrane region" description="Helical" evidence="1">
    <location>
        <begin position="154"/>
        <end position="174"/>
    </location>
</feature>
<feature type="topological domain" description="Intravirion" evidence="1">
    <location>
        <begin position="175"/>
        <end position="209"/>
    </location>
</feature>
<feature type="transmembrane region" description="Helical" evidence="1">
    <location>
        <begin position="210"/>
        <end position="230"/>
    </location>
</feature>
<feature type="topological domain" description="Virion surface" evidence="1">
    <location>
        <begin position="231"/>
        <end position="235"/>
    </location>
</feature>
<feature type="transmembrane region" description="Helical" evidence="1">
    <location>
        <begin position="236"/>
        <end position="256"/>
    </location>
</feature>
<feature type="topological domain" description="Intravirion" evidence="1">
    <location>
        <begin position="257"/>
        <end position="269"/>
    </location>
</feature>
<feature type="transmembrane region" description="Helical" evidence="1">
    <location>
        <begin position="270"/>
        <end position="290"/>
    </location>
</feature>
<feature type="topological domain" description="Virion surface" evidence="1">
    <location>
        <begin position="291"/>
        <end position="304"/>
    </location>
</feature>
<feature type="transmembrane region" description="Helical" evidence="1">
    <location>
        <begin position="305"/>
        <end position="325"/>
    </location>
</feature>
<feature type="topological domain" description="Intravirion" evidence="1">
    <location>
        <begin position="326"/>
        <end position="366"/>
    </location>
</feature>
<feature type="disulfide bond" description="Interchain (with gN)" evidence="1">
    <location>
        <position position="45"/>
    </location>
</feature>
<name>GM_SHV21</name>
<comment type="function">
    <text evidence="1">Envelope glycoprotein important for virion assembly and egress. Plays a role in the correct incorporation of gH-gL into virion membrane. Directs the glycoprotein N (gN) to the host trans-Golgi network.</text>
</comment>
<comment type="subunit">
    <text evidence="1">Interacts (via N-terminus) with gN (via N-terminus). The gM-gN heterodimer forms the gCII complex.</text>
</comment>
<comment type="subcellular location">
    <subcellularLocation>
        <location evidence="1">Virion membrane</location>
        <topology evidence="1">Multi-pass membrane protein</topology>
    </subcellularLocation>
    <subcellularLocation>
        <location evidence="1">Host Golgi apparatus</location>
        <location evidence="1">Host trans-Golgi network</location>
    </subcellularLocation>
    <subcellularLocation>
        <location evidence="1">Host endosome membrane</location>
        <topology evidence="1">Multi-pass membrane protein</topology>
    </subcellularLocation>
    <subcellularLocation>
        <location evidence="1">Host nucleus inner membrane</location>
        <topology evidence="1">Multi-pass membrane protein</topology>
    </subcellularLocation>
    <text evidence="1">During virion morphogenesis, this protein accumulates in the trans-Golgi network where secondary envelopment occurs.</text>
</comment>
<comment type="similarity">
    <text evidence="1">Belongs to the herpesviridae glycoprotein M family.</text>
</comment>
<protein>
    <recommendedName>
        <fullName evidence="1">Envelope glycoprotein M</fullName>
        <shortName evidence="1">gM</shortName>
    </recommendedName>
</protein>
<accession>Q01017</accession>
<organism>
    <name type="scientific">Saimiriine herpesvirus 2 (strain 11)</name>
    <name type="common">SaHV-2</name>
    <name type="synonym">Herpesvirus saimiri</name>
    <dbReference type="NCBI Taxonomy" id="10383"/>
    <lineage>
        <taxon>Viruses</taxon>
        <taxon>Duplodnaviria</taxon>
        <taxon>Heunggongvirae</taxon>
        <taxon>Peploviricota</taxon>
        <taxon>Herviviricetes</taxon>
        <taxon>Herpesvirales</taxon>
        <taxon>Orthoherpesviridae</taxon>
        <taxon>Gammaherpesvirinae</taxon>
        <taxon>Rhadinovirus</taxon>
        <taxon>Rhadinovirus saimiriinegamma2</taxon>
        <taxon>Saimiriine herpesvirus 2</taxon>
    </lineage>
</organism>